<reference key="1">
    <citation type="journal article" date="2007" name="PLoS Biol.">
        <title>Evolution of symbiotic bacteria in the distal human intestine.</title>
        <authorList>
            <person name="Xu J."/>
            <person name="Mahowald M.A."/>
            <person name="Ley R.E."/>
            <person name="Lozupone C.A."/>
            <person name="Hamady M."/>
            <person name="Martens E.C."/>
            <person name="Henrissat B."/>
            <person name="Coutinho P.M."/>
            <person name="Minx P."/>
            <person name="Latreille P."/>
            <person name="Cordum H."/>
            <person name="Van Brunt A."/>
            <person name="Kim K."/>
            <person name="Fulton R.S."/>
            <person name="Fulton L.A."/>
            <person name="Clifton S.W."/>
            <person name="Wilson R.K."/>
            <person name="Knight R.D."/>
            <person name="Gordon J.I."/>
        </authorList>
    </citation>
    <scope>NUCLEOTIDE SEQUENCE [LARGE SCALE GENOMIC DNA]</scope>
    <source>
        <strain>ATCC 8503 / DSM 20701 / CIP 104284 / JCM 5825 / NCTC 11152</strain>
    </source>
</reference>
<dbReference type="EMBL" id="CP000140">
    <property type="protein sequence ID" value="ABR44100.1"/>
    <property type="molecule type" value="Genomic_DNA"/>
</dbReference>
<dbReference type="RefSeq" id="WP_005853972.1">
    <property type="nucleotide sequence ID" value="NZ_LR215978.1"/>
</dbReference>
<dbReference type="SMR" id="A6LEI6"/>
<dbReference type="STRING" id="435591.BDI_2375"/>
<dbReference type="PaxDb" id="435591-BDI_2375"/>
<dbReference type="GeneID" id="93522368"/>
<dbReference type="KEGG" id="pdi:BDI_2375"/>
<dbReference type="eggNOG" id="COG0091">
    <property type="taxonomic scope" value="Bacteria"/>
</dbReference>
<dbReference type="HOGENOM" id="CLU_083987_3_1_10"/>
<dbReference type="BioCyc" id="PDIS435591:G1G5A-2440-MONOMER"/>
<dbReference type="Proteomes" id="UP000000566">
    <property type="component" value="Chromosome"/>
</dbReference>
<dbReference type="GO" id="GO:0022625">
    <property type="term" value="C:cytosolic large ribosomal subunit"/>
    <property type="evidence" value="ECO:0007669"/>
    <property type="project" value="TreeGrafter"/>
</dbReference>
<dbReference type="GO" id="GO:0019843">
    <property type="term" value="F:rRNA binding"/>
    <property type="evidence" value="ECO:0007669"/>
    <property type="project" value="UniProtKB-UniRule"/>
</dbReference>
<dbReference type="GO" id="GO:0003735">
    <property type="term" value="F:structural constituent of ribosome"/>
    <property type="evidence" value="ECO:0007669"/>
    <property type="project" value="InterPro"/>
</dbReference>
<dbReference type="GO" id="GO:0006412">
    <property type="term" value="P:translation"/>
    <property type="evidence" value="ECO:0007669"/>
    <property type="project" value="UniProtKB-UniRule"/>
</dbReference>
<dbReference type="CDD" id="cd00336">
    <property type="entry name" value="Ribosomal_L22"/>
    <property type="match status" value="1"/>
</dbReference>
<dbReference type="Gene3D" id="3.90.470.10">
    <property type="entry name" value="Ribosomal protein L22/L17"/>
    <property type="match status" value="1"/>
</dbReference>
<dbReference type="HAMAP" id="MF_01331_B">
    <property type="entry name" value="Ribosomal_uL22_B"/>
    <property type="match status" value="1"/>
</dbReference>
<dbReference type="InterPro" id="IPR001063">
    <property type="entry name" value="Ribosomal_uL22"/>
</dbReference>
<dbReference type="InterPro" id="IPR005727">
    <property type="entry name" value="Ribosomal_uL22_bac/chlpt-type"/>
</dbReference>
<dbReference type="InterPro" id="IPR047867">
    <property type="entry name" value="Ribosomal_uL22_bac/org-type"/>
</dbReference>
<dbReference type="InterPro" id="IPR036394">
    <property type="entry name" value="Ribosomal_uL22_sf"/>
</dbReference>
<dbReference type="NCBIfam" id="TIGR01044">
    <property type="entry name" value="rplV_bact"/>
    <property type="match status" value="1"/>
</dbReference>
<dbReference type="PANTHER" id="PTHR13501">
    <property type="entry name" value="CHLOROPLAST 50S RIBOSOMAL PROTEIN L22-RELATED"/>
    <property type="match status" value="1"/>
</dbReference>
<dbReference type="PANTHER" id="PTHR13501:SF8">
    <property type="entry name" value="LARGE RIBOSOMAL SUBUNIT PROTEIN UL22M"/>
    <property type="match status" value="1"/>
</dbReference>
<dbReference type="Pfam" id="PF00237">
    <property type="entry name" value="Ribosomal_L22"/>
    <property type="match status" value="1"/>
</dbReference>
<dbReference type="SUPFAM" id="SSF54843">
    <property type="entry name" value="Ribosomal protein L22"/>
    <property type="match status" value="1"/>
</dbReference>
<protein>
    <recommendedName>
        <fullName evidence="1">Large ribosomal subunit protein uL22</fullName>
    </recommendedName>
    <alternativeName>
        <fullName evidence="2">50S ribosomal protein L22</fullName>
    </alternativeName>
</protein>
<proteinExistence type="inferred from homology"/>
<name>RL22_PARD8</name>
<comment type="function">
    <text evidence="1">This protein binds specifically to 23S rRNA; its binding is stimulated by other ribosomal proteins, e.g. L4, L17, and L20. It is important during the early stages of 50S assembly. It makes multiple contacts with different domains of the 23S rRNA in the assembled 50S subunit and ribosome (By similarity).</text>
</comment>
<comment type="function">
    <text evidence="1">The globular domain of the protein is located near the polypeptide exit tunnel on the outside of the subunit, while an extended beta-hairpin is found that lines the wall of the exit tunnel in the center of the 70S ribosome.</text>
</comment>
<comment type="subunit">
    <text evidence="1">Part of the 50S ribosomal subunit.</text>
</comment>
<comment type="similarity">
    <text evidence="1">Belongs to the universal ribosomal protein uL22 family.</text>
</comment>
<gene>
    <name evidence="1" type="primary">rplV</name>
    <name type="ordered locus">BDI_2375</name>
</gene>
<evidence type="ECO:0000255" key="1">
    <source>
        <dbReference type="HAMAP-Rule" id="MF_01331"/>
    </source>
</evidence>
<evidence type="ECO:0000305" key="2"/>
<feature type="chain" id="PRO_1000052619" description="Large ribosomal subunit protein uL22">
    <location>
        <begin position="1"/>
        <end position="136"/>
    </location>
</feature>
<keyword id="KW-1185">Reference proteome</keyword>
<keyword id="KW-0687">Ribonucleoprotein</keyword>
<keyword id="KW-0689">Ribosomal protein</keyword>
<keyword id="KW-0694">RNA-binding</keyword>
<keyword id="KW-0699">rRNA-binding</keyword>
<accession>A6LEI6</accession>
<sequence>MGARKRISAEARKEAQKTMYFAKLNNVPTSPRKMRLVADMIRGMEVFRALGVLKFSNKEAAARVEKLLRSAIANWEQKNERKAEAGELCVSSISVDCATTLKRMRPAPQGRGYRIRKRSNHVTLFVDTLSKNDSQN</sequence>
<organism>
    <name type="scientific">Parabacteroides distasonis (strain ATCC 8503 / DSM 20701 / CIP 104284 / JCM 5825 / NCTC 11152)</name>
    <dbReference type="NCBI Taxonomy" id="435591"/>
    <lineage>
        <taxon>Bacteria</taxon>
        <taxon>Pseudomonadati</taxon>
        <taxon>Bacteroidota</taxon>
        <taxon>Bacteroidia</taxon>
        <taxon>Bacteroidales</taxon>
        <taxon>Tannerellaceae</taxon>
        <taxon>Parabacteroides</taxon>
    </lineage>
</organism>